<gene>
    <name evidence="1" type="primary">ureF</name>
    <name type="ordered locus">PFLU_0562</name>
</gene>
<comment type="function">
    <text evidence="1">Required for maturation of urease via the functional incorporation of the urease nickel metallocenter.</text>
</comment>
<comment type="subunit">
    <text evidence="1">UreD, UreF and UreG form a complex that acts as a GTP-hydrolysis-dependent molecular chaperone, activating the urease apoprotein by helping to assemble the nickel containing metallocenter of UreC. The UreE protein probably delivers the nickel.</text>
</comment>
<comment type="subcellular location">
    <subcellularLocation>
        <location evidence="1">Cytoplasm</location>
    </subcellularLocation>
</comment>
<comment type="similarity">
    <text evidence="1">Belongs to the UreF family.</text>
</comment>
<sequence>MNPAWALLRLASPQLPIGGYSYSQGLEMAVENGRVADAASARRWISDQLLLNLARFEAPLLLAHCQAALEADWPRLAQLCEEHRASRETRELYQESRQMGYSLQQLLNGLPELDDAARRFLEQHTEPHLALGWALAARAWRISPADALAAWLWSWLENQLAVLMKTLPLGQQAAQRLTSELLPLLQQAQQDASRIDPNPLGSAAFGLSLACMAHERQYSRLFRS</sequence>
<feature type="chain" id="PRO_1000215127" description="Urease accessory protein UreF">
    <location>
        <begin position="1"/>
        <end position="224"/>
    </location>
</feature>
<dbReference type="EMBL" id="AM181176">
    <property type="protein sequence ID" value="CAY46833.1"/>
    <property type="molecule type" value="Genomic_DNA"/>
</dbReference>
<dbReference type="RefSeq" id="WP_012721948.1">
    <property type="nucleotide sequence ID" value="NC_012660.1"/>
</dbReference>
<dbReference type="SMR" id="C3K4L4"/>
<dbReference type="STRING" id="294.SRM1_00627"/>
<dbReference type="PATRIC" id="fig|216595.4.peg.799"/>
<dbReference type="eggNOG" id="COG0830">
    <property type="taxonomic scope" value="Bacteria"/>
</dbReference>
<dbReference type="HOGENOM" id="CLU_049215_2_1_6"/>
<dbReference type="OrthoDB" id="9798772at2"/>
<dbReference type="GO" id="GO:0005737">
    <property type="term" value="C:cytoplasm"/>
    <property type="evidence" value="ECO:0007669"/>
    <property type="project" value="UniProtKB-SubCell"/>
</dbReference>
<dbReference type="GO" id="GO:0016151">
    <property type="term" value="F:nickel cation binding"/>
    <property type="evidence" value="ECO:0007669"/>
    <property type="project" value="UniProtKB-UniRule"/>
</dbReference>
<dbReference type="Gene3D" id="1.10.4190.10">
    <property type="entry name" value="Urease accessory protein UreF"/>
    <property type="match status" value="1"/>
</dbReference>
<dbReference type="HAMAP" id="MF_01385">
    <property type="entry name" value="UreF"/>
    <property type="match status" value="1"/>
</dbReference>
<dbReference type="InterPro" id="IPR002639">
    <property type="entry name" value="UreF"/>
</dbReference>
<dbReference type="InterPro" id="IPR038277">
    <property type="entry name" value="UreF_sf"/>
</dbReference>
<dbReference type="PANTHER" id="PTHR33620">
    <property type="entry name" value="UREASE ACCESSORY PROTEIN F"/>
    <property type="match status" value="1"/>
</dbReference>
<dbReference type="PANTHER" id="PTHR33620:SF1">
    <property type="entry name" value="UREASE ACCESSORY PROTEIN F"/>
    <property type="match status" value="1"/>
</dbReference>
<dbReference type="Pfam" id="PF01730">
    <property type="entry name" value="UreF"/>
    <property type="match status" value="1"/>
</dbReference>
<dbReference type="PIRSF" id="PIRSF009467">
    <property type="entry name" value="Ureas_acces_UreF"/>
    <property type="match status" value="1"/>
</dbReference>
<protein>
    <recommendedName>
        <fullName evidence="1">Urease accessory protein UreF</fullName>
    </recommendedName>
</protein>
<reference key="1">
    <citation type="journal article" date="2009" name="Genome Biol.">
        <title>Genomic and genetic analyses of diversity and plant interactions of Pseudomonas fluorescens.</title>
        <authorList>
            <person name="Silby M.W."/>
            <person name="Cerdeno-Tarraga A.M."/>
            <person name="Vernikos G.S."/>
            <person name="Giddens S.R."/>
            <person name="Jackson R.W."/>
            <person name="Preston G.M."/>
            <person name="Zhang X.-X."/>
            <person name="Moon C.D."/>
            <person name="Gehrig S.M."/>
            <person name="Godfrey S.A.C."/>
            <person name="Knight C.G."/>
            <person name="Malone J.G."/>
            <person name="Robinson Z."/>
            <person name="Spiers A.J."/>
            <person name="Harris S."/>
            <person name="Challis G.L."/>
            <person name="Yaxley A.M."/>
            <person name="Harris D."/>
            <person name="Seeger K."/>
            <person name="Murphy L."/>
            <person name="Rutter S."/>
            <person name="Squares R."/>
            <person name="Quail M.A."/>
            <person name="Saunders E."/>
            <person name="Mavromatis K."/>
            <person name="Brettin T.S."/>
            <person name="Bentley S.D."/>
            <person name="Hothersall J."/>
            <person name="Stephens E."/>
            <person name="Thomas C.M."/>
            <person name="Parkhill J."/>
            <person name="Levy S.B."/>
            <person name="Rainey P.B."/>
            <person name="Thomson N.R."/>
        </authorList>
    </citation>
    <scope>NUCLEOTIDE SEQUENCE [LARGE SCALE GENOMIC DNA]</scope>
    <source>
        <strain>SBW25</strain>
    </source>
</reference>
<organism>
    <name type="scientific">Pseudomonas fluorescens (strain SBW25)</name>
    <dbReference type="NCBI Taxonomy" id="216595"/>
    <lineage>
        <taxon>Bacteria</taxon>
        <taxon>Pseudomonadati</taxon>
        <taxon>Pseudomonadota</taxon>
        <taxon>Gammaproteobacteria</taxon>
        <taxon>Pseudomonadales</taxon>
        <taxon>Pseudomonadaceae</taxon>
        <taxon>Pseudomonas</taxon>
    </lineage>
</organism>
<accession>C3K4L4</accession>
<evidence type="ECO:0000255" key="1">
    <source>
        <dbReference type="HAMAP-Rule" id="MF_01385"/>
    </source>
</evidence>
<keyword id="KW-0143">Chaperone</keyword>
<keyword id="KW-0963">Cytoplasm</keyword>
<keyword id="KW-0996">Nickel insertion</keyword>
<proteinExistence type="inferred from homology"/>
<name>UREF_PSEFS</name>